<reference key="1">
    <citation type="journal article" date="1995" name="Virology">
        <title>The DNA sequence of human herpesvirus-6: structure, coding content, and genome evolution.</title>
        <authorList>
            <person name="Gompels U.A."/>
            <person name="Nicholas J."/>
            <person name="Lawrence G.L."/>
            <person name="Jones M."/>
            <person name="Thomson B.J."/>
            <person name="Martin M.E.D."/>
            <person name="Efstathiou S."/>
            <person name="Craxton M.A."/>
            <person name="Macaulay H.A."/>
        </authorList>
    </citation>
    <scope>NUCLEOTIDE SEQUENCE [LARGE SCALE GENOMIC DNA]</scope>
</reference>
<reference key="2">
    <citation type="journal article" date="2017" name="Viruses">
        <title>Analyses of Tissue Culture Adaptation of Human Herpesvirus-6A by Whole Genome Deep Sequencing Redefines the Reference Sequence and Identifies Virus Entry Complex Changes.</title>
        <authorList>
            <person name="Tweedy J.G."/>
            <person name="Escriva E."/>
            <person name="Topf M."/>
            <person name="Gompels U.A."/>
        </authorList>
    </citation>
    <scope>SEQUENCE REVISION TO 71-72</scope>
</reference>
<gene>
    <name type="primary">U83</name>
    <name type="synonym">EDRF3</name>
</gene>
<accession>P52460</accession>
<proteinExistence type="inferred from homology"/>
<protein>
    <recommendedName>
        <fullName>Putative CC-type chemokine U83</fullName>
    </recommendedName>
</protein>
<sequence>MAIGFICSSPDAELFSEKSRMSSSVLLGCLLCCMDWSAAVPGKTEPFRKLFDAIMIKKLKSCSAAYPSDLDEGSMCDMADASPTSLELGLSKLDKES</sequence>
<comment type="similarity">
    <text evidence="3">Belongs to the intercrine beta (chemokine CC) family. Highly divergent.</text>
</comment>
<name>CCU83_HHV6U</name>
<keyword id="KW-0202">Cytokine</keyword>
<keyword id="KW-1015">Disulfide bond</keyword>
<keyword id="KW-1185">Reference proteome</keyword>
<keyword id="KW-0732">Signal</keyword>
<evidence type="ECO:0000250" key="1"/>
<evidence type="ECO:0000255" key="2"/>
<evidence type="ECO:0000305" key="3"/>
<feature type="signal peptide" evidence="2">
    <location>
        <begin position="1"/>
        <end status="unknown"/>
    </location>
</feature>
<feature type="chain" id="PRO_0000005246" description="Putative CC-type chemokine U83">
    <location>
        <begin status="unknown"/>
        <end position="97"/>
    </location>
</feature>
<feature type="disulfide bond" evidence="1">
    <location>
        <begin position="32"/>
        <end position="62"/>
    </location>
</feature>
<feature type="disulfide bond" evidence="1">
    <location>
        <begin position="33"/>
        <end position="76"/>
    </location>
</feature>
<organism>
    <name type="scientific">Human herpesvirus 6A (strain Uganda-1102)</name>
    <name type="common">HHV-6 variant A</name>
    <name type="synonym">Human B lymphotropic virus</name>
    <dbReference type="NCBI Taxonomy" id="10370"/>
    <lineage>
        <taxon>Viruses</taxon>
        <taxon>Duplodnaviria</taxon>
        <taxon>Heunggongvirae</taxon>
        <taxon>Peploviricota</taxon>
        <taxon>Herviviricetes</taxon>
        <taxon>Herpesvirales</taxon>
        <taxon>Orthoherpesviridae</taxon>
        <taxon>Betaherpesvirinae</taxon>
        <taxon>Roseolovirus</taxon>
        <taxon>Roseolovirus humanbeta6a</taxon>
        <taxon>Human betaherpesvirus 6A</taxon>
    </lineage>
</organism>
<dbReference type="EMBL" id="X83413">
    <property type="protein sequence ID" value="CAA58332.2"/>
    <property type="molecule type" value="Genomic_DNA"/>
</dbReference>
<dbReference type="RefSeq" id="NP_042976.1">
    <property type="nucleotide sequence ID" value="NC_001664.2"/>
</dbReference>
<dbReference type="DNASU" id="1487963"/>
<dbReference type="GeneID" id="1487963"/>
<dbReference type="KEGG" id="vg:1487963"/>
<dbReference type="Proteomes" id="UP000009295">
    <property type="component" value="Segment"/>
</dbReference>
<dbReference type="GO" id="GO:0005615">
    <property type="term" value="C:extracellular space"/>
    <property type="evidence" value="ECO:0007669"/>
    <property type="project" value="UniProtKB-KW"/>
</dbReference>
<dbReference type="GO" id="GO:0005125">
    <property type="term" value="F:cytokine activity"/>
    <property type="evidence" value="ECO:0007669"/>
    <property type="project" value="UniProtKB-KW"/>
</dbReference>
<dbReference type="InterPro" id="IPR035347">
    <property type="entry name" value="Putative_chemo_U83"/>
</dbReference>
<dbReference type="Pfam" id="PF17465">
    <property type="entry name" value="U83"/>
    <property type="match status" value="1"/>
</dbReference>
<organismHost>
    <name type="scientific">Homo sapiens</name>
    <name type="common">Human</name>
    <dbReference type="NCBI Taxonomy" id="9606"/>
</organismHost>